<name>GDIR1_HUMAN</name>
<gene>
    <name type="primary">ARHGDIA</name>
    <name type="synonym">GDIA1</name>
</gene>
<feature type="initiator methionine" description="Removed" evidence="9 14 16">
    <location>
        <position position="1"/>
    </location>
</feature>
<feature type="chain" id="PRO_0000219013" description="Rho GDP-dissociation inhibitor 1">
    <location>
        <begin position="2"/>
        <end position="204"/>
    </location>
</feature>
<feature type="region of interest" description="Disordered" evidence="2">
    <location>
        <begin position="1"/>
        <end position="36"/>
    </location>
</feature>
<feature type="modified residue" description="N-acetylalanine" evidence="9 14 16">
    <location>
        <position position="2"/>
    </location>
</feature>
<feature type="modified residue" description="Phosphoserine" evidence="1">
    <location>
        <position position="34"/>
    </location>
</feature>
<feature type="modified residue" description="N6-acetyllysine" evidence="1">
    <location>
        <position position="43"/>
    </location>
</feature>
<feature type="modified residue" description="Phosphoserine" evidence="17">
    <location>
        <position position="47"/>
    </location>
</feature>
<feature type="modified residue" description="N6-acetyllysine" evidence="15">
    <location>
        <position position="105"/>
    </location>
</feature>
<feature type="modified residue" description="N6-acetyllysine" evidence="15">
    <location>
        <position position="127"/>
    </location>
</feature>
<feature type="modified residue" description="N6-acetyllysine; alternate" evidence="13 15">
    <location>
        <position position="141"/>
    </location>
</feature>
<feature type="modified residue" description="N6-succinyllysine; alternate" evidence="1">
    <location>
        <position position="141"/>
    </location>
</feature>
<feature type="modified residue" description="N6-acetyllysine" evidence="15">
    <location>
        <position position="178"/>
    </location>
</feature>
<feature type="cross-link" description="Glycyl lysine isopeptide (Lys-Gly) (interchain with G-Cter in SUMO1); alternate" evidence="18">
    <location>
        <position position="138"/>
    </location>
</feature>
<feature type="cross-link" description="Glycyl lysine isopeptide (Lys-Gly) (interchain with G-Cter in SUMO2); alternate" evidence="18">
    <location>
        <position position="138"/>
    </location>
</feature>
<feature type="cross-link" description="Glycyl lysine isopeptide (Lys-Gly) (interchain with G-Cter in SUMO1); alternate" evidence="18">
    <location>
        <position position="141"/>
    </location>
</feature>
<feature type="cross-link" description="Glycyl lysine isopeptide (Lys-Gly) (interchain with G-Cter in SUMO2); alternate" evidence="18">
    <location>
        <position position="141"/>
    </location>
</feature>
<feature type="splice variant" id="VSP_046699" description="In isoform 2." evidence="10">
    <original>IDKTDYMVGSYGPRAEEYEFLTPVEEAPKGMLARGSYSIKSRFTD</original>
    <variation>N</variation>
    <location>
        <begin position="139"/>
        <end position="183"/>
    </location>
</feature>
<feature type="sequence variant" id="VAR_069814" description="In NPHS8; produces mislocalization into the nucleus, hyperactivation of Rho-GTPases RHOA, RAC1 and CDC42 and impaired cell motility." evidence="6">
    <location>
        <position position="185"/>
    </location>
</feature>
<feature type="mutagenesis site" description="Loss of RHOA interaction; when associated with A-185." evidence="3">
    <original>D</original>
    <variation>A</variation>
    <location>
        <position position="45"/>
    </location>
</feature>
<feature type="mutagenesis site" description="Loss of interaction with NGFR." evidence="8">
    <original>K</original>
    <variation>A</variation>
    <location>
        <position position="99"/>
    </location>
</feature>
<feature type="mutagenesis site" description="Loss of RHOA interaction; when associated with A-45." evidence="3">
    <original>D</original>
    <variation>A</variation>
    <location>
        <position position="185"/>
    </location>
</feature>
<feature type="mutagenesis site" description="Loss of interaction with NGFR." evidence="8">
    <original>K</original>
    <variation>A</variation>
    <location>
        <position position="199"/>
    </location>
</feature>
<feature type="sequence conflict" description="In Ref. 3; CAA45344 and 5; BAG35268." evidence="11" ref="3 5">
    <original>I</original>
    <variation>V</variation>
    <location>
        <position position="139"/>
    </location>
</feature>
<feature type="sequence conflict" description="In Ref. 13; AA sequence." evidence="11" ref="13">
    <original>D</original>
    <variation>R</variation>
    <location>
        <position position="188"/>
    </location>
</feature>
<feature type="strand" evidence="22">
    <location>
        <begin position="3"/>
        <end position="5"/>
    </location>
</feature>
<feature type="helix" evidence="22">
    <location>
        <begin position="8"/>
        <end position="11"/>
    </location>
</feature>
<feature type="helix" evidence="22">
    <location>
        <begin position="14"/>
        <end position="22"/>
    </location>
</feature>
<feature type="turn" evidence="22">
    <location>
        <begin position="23"/>
        <end position="27"/>
    </location>
</feature>
<feature type="strand" evidence="22">
    <location>
        <begin position="32"/>
        <end position="34"/>
    </location>
</feature>
<feature type="helix" evidence="19">
    <location>
        <begin position="35"/>
        <end position="39"/>
    </location>
</feature>
<feature type="turn" evidence="22">
    <location>
        <begin position="41"/>
        <end position="45"/>
    </location>
</feature>
<feature type="helix" evidence="19">
    <location>
        <begin position="46"/>
        <end position="56"/>
    </location>
</feature>
<feature type="turn" evidence="21">
    <location>
        <begin position="59"/>
        <end position="63"/>
    </location>
</feature>
<feature type="strand" evidence="20">
    <location>
        <begin position="69"/>
        <end position="78"/>
    </location>
</feature>
<feature type="strand" evidence="20">
    <location>
        <begin position="82"/>
        <end position="84"/>
    </location>
</feature>
<feature type="strand" evidence="20">
    <location>
        <begin position="87"/>
        <end position="89"/>
    </location>
</feature>
<feature type="helix" evidence="20">
    <location>
        <begin position="94"/>
        <end position="99"/>
    </location>
</feature>
<feature type="strand" evidence="20">
    <location>
        <begin position="102"/>
        <end position="105"/>
    </location>
</feature>
<feature type="strand" evidence="20">
    <location>
        <begin position="109"/>
        <end position="118"/>
    </location>
</feature>
<feature type="strand" evidence="20">
    <location>
        <begin position="123"/>
        <end position="134"/>
    </location>
</feature>
<feature type="strand" evidence="20">
    <location>
        <begin position="137"/>
        <end position="149"/>
    </location>
</feature>
<feature type="strand" evidence="20">
    <location>
        <begin position="156"/>
        <end position="159"/>
    </location>
</feature>
<feature type="turn" evidence="20">
    <location>
        <begin position="169"/>
        <end position="171"/>
    </location>
</feature>
<feature type="strand" evidence="20">
    <location>
        <begin position="173"/>
        <end position="182"/>
    </location>
</feature>
<feature type="strand" evidence="20">
    <location>
        <begin position="189"/>
        <end position="200"/>
    </location>
</feature>
<proteinExistence type="evidence at protein level"/>
<keyword id="KW-0002">3D-structure</keyword>
<keyword id="KW-0007">Acetylation</keyword>
<keyword id="KW-0025">Alternative splicing</keyword>
<keyword id="KW-0963">Cytoplasm</keyword>
<keyword id="KW-0903">Direct protein sequencing</keyword>
<keyword id="KW-0225">Disease variant</keyword>
<keyword id="KW-0343">GTPase activation</keyword>
<keyword id="KW-1017">Isopeptide bond</keyword>
<keyword id="KW-0597">Phosphoprotein</keyword>
<keyword id="KW-1267">Proteomics identification</keyword>
<keyword id="KW-1185">Reference proteome</keyword>
<keyword id="KW-0832">Ubl conjugation</keyword>
<accession>P52565</accession>
<accession>A8MXW0</accession>
<accession>B2R5X1</accession>
<accession>B4DDD3</accession>
<accession>B4DUV9</accession>
<accession>Q6IBM5</accession>
<sequence>MAEQEPTAEQLAQIAAENEEDEHSVNYKPPAQKSIQEIQELDKDDESLRKYKEALLGRVAVSADPNVPNVVVTGLTLVCSSAPGPLELDLTGDLESFKKQSFVLKEGVEYRIKISFRVNREIVSGMKYIQHTYRKGVKIDKTDYMVGSYGPRAEEYEFLTPVEEAPKGMLARGSYSIKSRFTDDDKTDHLSWEWNLTIKKDWKD</sequence>
<evidence type="ECO:0000250" key="1">
    <source>
        <dbReference type="UniProtKB" id="Q99PT1"/>
    </source>
</evidence>
<evidence type="ECO:0000256" key="2">
    <source>
        <dbReference type="SAM" id="MobiDB-lite"/>
    </source>
</evidence>
<evidence type="ECO:0000269" key="3">
    <source>
    </source>
</evidence>
<evidence type="ECO:0000269" key="4">
    <source>
    </source>
</evidence>
<evidence type="ECO:0000269" key="5">
    <source>
    </source>
</evidence>
<evidence type="ECO:0000269" key="6">
    <source>
    </source>
</evidence>
<evidence type="ECO:0000269" key="7">
    <source>
    </source>
</evidence>
<evidence type="ECO:0000269" key="8">
    <source>
    </source>
</evidence>
<evidence type="ECO:0000269" key="9">
    <source ref="12"/>
</evidence>
<evidence type="ECO:0000303" key="10">
    <source>
    </source>
</evidence>
<evidence type="ECO:0000305" key="11"/>
<evidence type="ECO:0007744" key="12">
    <source>
        <dbReference type="PDB" id="2N80"/>
    </source>
</evidence>
<evidence type="ECO:0007744" key="13">
    <source>
    </source>
</evidence>
<evidence type="ECO:0007744" key="14">
    <source>
    </source>
</evidence>
<evidence type="ECO:0007744" key="15">
    <source>
    </source>
</evidence>
<evidence type="ECO:0007744" key="16">
    <source>
    </source>
</evidence>
<evidence type="ECO:0007744" key="17">
    <source>
    </source>
</evidence>
<evidence type="ECO:0007744" key="18">
    <source>
    </source>
</evidence>
<evidence type="ECO:0007829" key="19">
    <source>
        <dbReference type="PDB" id="1HH4"/>
    </source>
</evidence>
<evidence type="ECO:0007829" key="20">
    <source>
        <dbReference type="PDB" id="1KMT"/>
    </source>
</evidence>
<evidence type="ECO:0007829" key="21">
    <source>
        <dbReference type="PDB" id="2N80"/>
    </source>
</evidence>
<evidence type="ECO:0007829" key="22">
    <source>
        <dbReference type="PDB" id="8X8T"/>
    </source>
</evidence>
<comment type="function">
    <text evidence="3 6">Controls Rho proteins homeostasis. Regulates the GDP/GTP exchange reaction of the Rho proteins by inhibiting the dissociation of GDP from them, and the subsequent binding of GTP to them. Retains Rho proteins such as CDC42, RAC1 and RHOA in an inactive cytosolic pool, regulating their stability and protecting them from degradation. Actively involved in the recycling and distribution of activated Rho GTPases in the cell, mediates extraction from membranes of both inactive and activated molecules due its exceptionally high affinity for prenylated forms. Through the modulation of Rho proteins, may play a role in cell motility regulation. In glioma cells, inhibits cell migration and invasion by mediating the signals of SEMA5A and PLXNB3 that lead to inactivation of RAC1.</text>
</comment>
<comment type="subunit">
    <text evidence="1 3 4 5 6 7 8">Monomer (By similarity). Interacts with FER (PubMed:21122136). Interacts with PLXNB3 (By similarity). Forms a heterodimer with RAC1 (PubMed:23434736). Interacts with RHOA, the affinity is increased by three orders of magnitude when RHOA is prenylated (PubMed:20400958, PubMed:20628200, PubMed:23434736, PubMed:26646181). Interacts with PSMD10; the interaction increases ARHGDIA association with RHOA, leading to ARHGDIA-mediated inactivation of RHOA and ROCK and prolonged AKT activation (PubMed:20628200). Interacts with KANK2; the interaction is direct and may regulate the interaction of ARHGDIA with RHOA, RAC1 and CDC42 (PubMed:25961457). Interacts with RHOC (PubMed:20400958). Interacts with CDC42 (PubMed:23434736). Interacts with NGFR (via death domain); NGFR binding decreases the affinity for RHOA (PubMed:26646181).</text>
</comment>
<comment type="interaction">
    <interactant intactId="EBI-712693">
        <id>P52565</id>
    </interactant>
    <interactant intactId="EBI-81752">
        <id>P60953</id>
        <label>CDC42</label>
    </interactant>
    <organismsDiffer>false</organismsDiffer>
    <experiments>4</experiments>
</comment>
<comment type="interaction">
    <interactant intactId="EBI-712693">
        <id>P52565</id>
    </interactant>
    <interactant intactId="EBI-413628">
        <id>P63000</id>
        <label>RAC1</label>
    </interactant>
    <organismsDiffer>false</organismsDiffer>
    <experiments>10</experiments>
</comment>
<comment type="interaction">
    <interactant intactId="EBI-712693">
        <id>P52565</id>
    </interactant>
    <interactant intactId="EBI-446668">
        <id>P61586</id>
        <label>RHOA</label>
    </interactant>
    <organismsDiffer>false</organismsDiffer>
    <experiments>6</experiments>
</comment>
<comment type="interaction">
    <interactant intactId="EBI-712693">
        <id>P52565</id>
    </interactant>
    <interactant intactId="EBI-717399">
        <id>Q9BSI4</id>
        <label>TINF2</label>
    </interactant>
    <organismsDiffer>false</organismsDiffer>
    <experiments>2</experiments>
</comment>
<comment type="interaction">
    <interactant intactId="EBI-712693">
        <id>P52565</id>
    </interactant>
    <interactant intactId="EBI-530381">
        <id>Q9NS68</id>
        <label>TNFRSF19</label>
    </interactant>
    <organismsDiffer>false</organismsDiffer>
    <experiments>3</experiments>
</comment>
<comment type="subcellular location">
    <subcellularLocation>
        <location evidence="6">Cytoplasm</location>
    </subcellularLocation>
</comment>
<comment type="alternative products">
    <event type="alternative splicing"/>
    <isoform>
        <id>P52565-1</id>
        <name>1</name>
        <sequence type="displayed"/>
    </isoform>
    <isoform>
        <id>P52565-2</id>
        <name>2</name>
        <sequence type="described" ref="VSP_046699"/>
    </isoform>
</comment>
<comment type="disease" evidence="6">
    <disease id="DI-03751">
        <name>Nephrotic syndrome 8</name>
        <acronym>NPHS8</acronym>
        <description>A form of nephrotic syndrome, a renal disease clinically characterized by progressive renal failure, severe proteinuria, hypoalbuminemia, hyperlipidemia and edema. Kidney biopsies show diffuse mesangial sclerosis, with small glomeruli, hypercellularity, increased extracellular matrix, and contracted/collapsed glomerular tufts surrounded by immature or abnormal podocytes.</description>
        <dbReference type="MIM" id="615244"/>
    </disease>
    <text>The disease is caused by variants affecting the gene represented in this entry.</text>
</comment>
<comment type="similarity">
    <text evidence="11">Belongs to the Rho GDI family.</text>
</comment>
<dbReference type="EMBL" id="X69550">
    <property type="protein sequence ID" value="CAA49281.1"/>
    <property type="molecule type" value="mRNA"/>
</dbReference>
<dbReference type="EMBL" id="D13989">
    <property type="protein sequence ID" value="BAA03096.1"/>
    <property type="molecule type" value="mRNA"/>
</dbReference>
<dbReference type="EMBL" id="M97579">
    <property type="protein sequence ID" value="AAA36566.1"/>
    <property type="molecule type" value="mRNA"/>
</dbReference>
<dbReference type="EMBL" id="X63863">
    <property type="protein sequence ID" value="CAA45344.1"/>
    <property type="molecule type" value="Genomic_DNA"/>
</dbReference>
<dbReference type="EMBL" id="AK300816">
    <property type="protein sequence ID" value="BAG62471.1"/>
    <property type="molecule type" value="mRNA"/>
</dbReference>
<dbReference type="EMBL" id="AK312347">
    <property type="protein sequence ID" value="BAG35268.1"/>
    <property type="molecule type" value="mRNA"/>
</dbReference>
<dbReference type="EMBL" id="AF498926">
    <property type="protein sequence ID" value="AAM21074.1"/>
    <property type="molecule type" value="mRNA"/>
</dbReference>
<dbReference type="EMBL" id="BT006884">
    <property type="protein sequence ID" value="AAP35530.1"/>
    <property type="molecule type" value="mRNA"/>
</dbReference>
<dbReference type="EMBL" id="CR456777">
    <property type="protein sequence ID" value="CAG33058.1"/>
    <property type="molecule type" value="mRNA"/>
</dbReference>
<dbReference type="EMBL" id="AC145207">
    <property type="status" value="NOT_ANNOTATED_CDS"/>
    <property type="molecule type" value="Genomic_DNA"/>
</dbReference>
<dbReference type="EMBL" id="CH471099">
    <property type="protein sequence ID" value="EAW89697.1"/>
    <property type="molecule type" value="Genomic_DNA"/>
</dbReference>
<dbReference type="EMBL" id="BC005851">
    <property type="protein sequence ID" value="AAH05851.1"/>
    <property type="molecule type" value="mRNA"/>
</dbReference>
<dbReference type="EMBL" id="BC005875">
    <property type="protein sequence ID" value="AAH05875.1"/>
    <property type="molecule type" value="mRNA"/>
</dbReference>
<dbReference type="EMBL" id="BC008701">
    <property type="protein sequence ID" value="AAH08701.1"/>
    <property type="molecule type" value="mRNA"/>
</dbReference>
<dbReference type="EMBL" id="BC009759">
    <property type="protein sequence ID" value="AAH09759.1"/>
    <property type="molecule type" value="mRNA"/>
</dbReference>
<dbReference type="EMBL" id="BC016031">
    <property type="protein sequence ID" value="AAH16031.1"/>
    <property type="molecule type" value="mRNA"/>
</dbReference>
<dbReference type="EMBL" id="BC016185">
    <property type="protein sequence ID" value="AAH16185.1"/>
    <property type="molecule type" value="mRNA"/>
</dbReference>
<dbReference type="EMBL" id="BC024258">
    <property type="protein sequence ID" value="AAH24258.1"/>
    <property type="molecule type" value="mRNA"/>
</dbReference>
<dbReference type="EMBL" id="BC027730">
    <property type="protein sequence ID" value="AAH27730.1"/>
    <property type="molecule type" value="mRNA"/>
</dbReference>
<dbReference type="EMBL" id="BC075827">
    <property type="protein sequence ID" value="AAH75827.1"/>
    <property type="molecule type" value="mRNA"/>
</dbReference>
<dbReference type="EMBL" id="BC106044">
    <property type="protein sequence ID" value="AAI06045.1"/>
    <property type="molecule type" value="mRNA"/>
</dbReference>
<dbReference type="CCDS" id="CCDS11788.1">
    <molecule id="P52565-1"/>
</dbReference>
<dbReference type="CCDS" id="CCDS58609.1">
    <molecule id="P52565-2"/>
</dbReference>
<dbReference type="PIR" id="I38156">
    <property type="entry name" value="I38156"/>
</dbReference>
<dbReference type="RefSeq" id="NP_001172006.1">
    <molecule id="P52565-1"/>
    <property type="nucleotide sequence ID" value="NM_001185077.3"/>
</dbReference>
<dbReference type="RefSeq" id="NP_001172007.1">
    <molecule id="P52565-2"/>
    <property type="nucleotide sequence ID" value="NM_001185078.3"/>
</dbReference>
<dbReference type="RefSeq" id="NP_001288169.1">
    <property type="nucleotide sequence ID" value="NM_001301240.1"/>
</dbReference>
<dbReference type="RefSeq" id="NP_001288170.1">
    <property type="nucleotide sequence ID" value="NM_001301241.1"/>
</dbReference>
<dbReference type="RefSeq" id="NP_001288171.1">
    <property type="nucleotide sequence ID" value="NM_001301242.1"/>
</dbReference>
<dbReference type="RefSeq" id="NP_001288172.1">
    <property type="nucleotide sequence ID" value="NM_001301243.1"/>
</dbReference>
<dbReference type="RefSeq" id="NP_004300.1">
    <molecule id="P52565-1"/>
    <property type="nucleotide sequence ID" value="NM_004309.6"/>
</dbReference>
<dbReference type="PDB" id="1CC0">
    <property type="method" value="X-ray"/>
    <property type="resolution" value="5.00 A"/>
    <property type="chains" value="E/F=1-204"/>
</dbReference>
<dbReference type="PDB" id="1FSO">
    <property type="method" value="X-ray"/>
    <property type="resolution" value="2.00 A"/>
    <property type="chains" value="A=67-204"/>
</dbReference>
<dbReference type="PDB" id="1FST">
    <property type="method" value="X-ray"/>
    <property type="resolution" value="2.70 A"/>
    <property type="chains" value="A/B=24-204"/>
</dbReference>
<dbReference type="PDB" id="1FT0">
    <property type="method" value="X-ray"/>
    <property type="resolution" value="2.60 A"/>
    <property type="chains" value="A/B=67-204"/>
</dbReference>
<dbReference type="PDB" id="1FT3">
    <property type="method" value="X-ray"/>
    <property type="resolution" value="2.80 A"/>
    <property type="chains" value="A/B=67-204"/>
</dbReference>
<dbReference type="PDB" id="1HH4">
    <property type="method" value="X-ray"/>
    <property type="resolution" value="2.70 A"/>
    <property type="chains" value="D/E=1-204"/>
</dbReference>
<dbReference type="PDB" id="1KMT">
    <property type="method" value="X-ray"/>
    <property type="resolution" value="1.30 A"/>
    <property type="chains" value="A/B=67-204"/>
</dbReference>
<dbReference type="PDB" id="1QVY">
    <property type="method" value="X-ray"/>
    <property type="resolution" value="1.60 A"/>
    <property type="chains" value="A/B/C/D=67-204"/>
</dbReference>
<dbReference type="PDB" id="1RHO">
    <property type="method" value="X-ray"/>
    <property type="resolution" value="2.50 A"/>
    <property type="chains" value="A/B/C=59-203"/>
</dbReference>
<dbReference type="PDB" id="2BXW">
    <property type="method" value="X-ray"/>
    <property type="resolution" value="2.40 A"/>
    <property type="chains" value="A/B=67-204"/>
</dbReference>
<dbReference type="PDB" id="2JHS">
    <property type="method" value="X-ray"/>
    <property type="resolution" value="1.95 A"/>
    <property type="chains" value="A=67-202"/>
</dbReference>
<dbReference type="PDB" id="2JHT">
    <property type="method" value="X-ray"/>
    <property type="resolution" value="1.88 A"/>
    <property type="chains" value="A/B/C/D=67-202"/>
</dbReference>
<dbReference type="PDB" id="2JHU">
    <property type="method" value="X-ray"/>
    <property type="resolution" value="1.65 A"/>
    <property type="chains" value="A/B=67-202"/>
</dbReference>
<dbReference type="PDB" id="2JHV">
    <property type="method" value="X-ray"/>
    <property type="resolution" value="2.07 A"/>
    <property type="chains" value="A/B/C/D/E/F=67-202"/>
</dbReference>
<dbReference type="PDB" id="2JHW">
    <property type="method" value="X-ray"/>
    <property type="resolution" value="2.50 A"/>
    <property type="chains" value="A/B=67-202"/>
</dbReference>
<dbReference type="PDB" id="2JHX">
    <property type="method" value="X-ray"/>
    <property type="resolution" value="1.60 A"/>
    <property type="chains" value="A/B=67-202"/>
</dbReference>
<dbReference type="PDB" id="2JHY">
    <property type="method" value="X-ray"/>
    <property type="resolution" value="1.90 A"/>
    <property type="chains" value="A=67-202"/>
</dbReference>
<dbReference type="PDB" id="2JHZ">
    <property type="method" value="X-ray"/>
    <property type="resolution" value="2.20 A"/>
    <property type="chains" value="A/B=67-202"/>
</dbReference>
<dbReference type="PDB" id="2JI0">
    <property type="method" value="X-ray"/>
    <property type="resolution" value="2.10 A"/>
    <property type="chains" value="A=67-202"/>
</dbReference>
<dbReference type="PDB" id="2N80">
    <property type="method" value="NMR"/>
    <property type="chains" value="B=31-204"/>
</dbReference>
<dbReference type="PDB" id="8X8T">
    <property type="method" value="NMR"/>
    <property type="chains" value="A=2-60"/>
</dbReference>
<dbReference type="PDBsum" id="1CC0"/>
<dbReference type="PDBsum" id="1FSO"/>
<dbReference type="PDBsum" id="1FST"/>
<dbReference type="PDBsum" id="1FT0"/>
<dbReference type="PDBsum" id="1FT3"/>
<dbReference type="PDBsum" id="1HH4"/>
<dbReference type="PDBsum" id="1KMT"/>
<dbReference type="PDBsum" id="1QVY"/>
<dbReference type="PDBsum" id="1RHO"/>
<dbReference type="PDBsum" id="2BXW"/>
<dbReference type="PDBsum" id="2JHS"/>
<dbReference type="PDBsum" id="2JHT"/>
<dbReference type="PDBsum" id="2JHU"/>
<dbReference type="PDBsum" id="2JHV"/>
<dbReference type="PDBsum" id="2JHW"/>
<dbReference type="PDBsum" id="2JHX"/>
<dbReference type="PDBsum" id="2JHY"/>
<dbReference type="PDBsum" id="2JHZ"/>
<dbReference type="PDBsum" id="2JI0"/>
<dbReference type="PDBsum" id="2N80"/>
<dbReference type="PDBsum" id="8X8T"/>
<dbReference type="SMR" id="P52565"/>
<dbReference type="BioGRID" id="106889">
    <property type="interactions" value="188"/>
</dbReference>
<dbReference type="ELM" id="P52565"/>
<dbReference type="FunCoup" id="P52565">
    <property type="interactions" value="2189"/>
</dbReference>
<dbReference type="IntAct" id="P52565">
    <property type="interactions" value="66"/>
</dbReference>
<dbReference type="MINT" id="P52565"/>
<dbReference type="STRING" id="9606.ENSP00000463939"/>
<dbReference type="ChEMBL" id="CHEMBL3638327"/>
<dbReference type="GlyGen" id="P52565">
    <property type="glycosylation" value="2 sites, 1 O-linked glycan (1 site)"/>
</dbReference>
<dbReference type="iPTMnet" id="P52565"/>
<dbReference type="MetOSite" id="P52565"/>
<dbReference type="PhosphoSitePlus" id="P52565"/>
<dbReference type="SwissPalm" id="P52565"/>
<dbReference type="BioMuta" id="ARHGDIA"/>
<dbReference type="DMDM" id="1707892"/>
<dbReference type="OGP" id="P52565"/>
<dbReference type="REPRODUCTION-2DPAGE" id="IPI00003815"/>
<dbReference type="jPOST" id="P52565"/>
<dbReference type="MassIVE" id="P52565"/>
<dbReference type="PaxDb" id="9606-ENSP00000269321"/>
<dbReference type="PeptideAtlas" id="P52565"/>
<dbReference type="PRIDE" id="P52565"/>
<dbReference type="ProteomicsDB" id="2358"/>
<dbReference type="ProteomicsDB" id="56489">
    <molecule id="P52565-1"/>
</dbReference>
<dbReference type="Pumba" id="P52565"/>
<dbReference type="TopDownProteomics" id="P52565-1">
    <molecule id="P52565-1"/>
</dbReference>
<dbReference type="Antibodypedia" id="3880">
    <property type="antibodies" value="573 antibodies from 38 providers"/>
</dbReference>
<dbReference type="DNASU" id="396"/>
<dbReference type="Ensembl" id="ENST00000269321.12">
    <molecule id="P52565-1"/>
    <property type="protein sequence ID" value="ENSP00000269321.7"/>
    <property type="gene ID" value="ENSG00000141522.13"/>
</dbReference>
<dbReference type="Ensembl" id="ENST00000400721.8">
    <molecule id="P52565-2"/>
    <property type="protein sequence ID" value="ENSP00000383556.4"/>
    <property type="gene ID" value="ENSG00000141522.13"/>
</dbReference>
<dbReference type="Ensembl" id="ENST00000541078.7">
    <molecule id="P52565-1"/>
    <property type="protein sequence ID" value="ENSP00000441348.2"/>
    <property type="gene ID" value="ENSG00000141522.13"/>
</dbReference>
<dbReference type="Ensembl" id="ENST00000580685.5">
    <molecule id="P52565-1"/>
    <property type="protein sequence ID" value="ENSP00000464205.1"/>
    <property type="gene ID" value="ENSG00000141522.13"/>
</dbReference>
<dbReference type="GeneID" id="396"/>
<dbReference type="KEGG" id="hsa:396"/>
<dbReference type="MANE-Select" id="ENST00000269321.12">
    <property type="protein sequence ID" value="ENSP00000269321.7"/>
    <property type="RefSeq nucleotide sequence ID" value="NM_004309.6"/>
    <property type="RefSeq protein sequence ID" value="NP_004300.1"/>
</dbReference>
<dbReference type="UCSC" id="uc021ufg.2">
    <molecule id="P52565-1"/>
    <property type="organism name" value="human"/>
</dbReference>
<dbReference type="AGR" id="HGNC:678"/>
<dbReference type="CTD" id="396"/>
<dbReference type="DisGeNET" id="396"/>
<dbReference type="GeneCards" id="ARHGDIA"/>
<dbReference type="HGNC" id="HGNC:678">
    <property type="gene designation" value="ARHGDIA"/>
</dbReference>
<dbReference type="HPA" id="ENSG00000141522">
    <property type="expression patterns" value="Low tissue specificity"/>
</dbReference>
<dbReference type="MalaCards" id="ARHGDIA"/>
<dbReference type="MIM" id="601925">
    <property type="type" value="gene"/>
</dbReference>
<dbReference type="MIM" id="615244">
    <property type="type" value="phenotype"/>
</dbReference>
<dbReference type="neXtProt" id="NX_P52565"/>
<dbReference type="OpenTargets" id="ENSG00000141522"/>
<dbReference type="Orphanet" id="656">
    <property type="disease" value="Hereditary steroid-resistant nephrotic syndrome"/>
</dbReference>
<dbReference type="PharmGKB" id="PA24963"/>
<dbReference type="VEuPathDB" id="HostDB:ENSG00000141522"/>
<dbReference type="eggNOG" id="KOG3205">
    <property type="taxonomic scope" value="Eukaryota"/>
</dbReference>
<dbReference type="GeneTree" id="ENSGT00390000006233"/>
<dbReference type="HOGENOM" id="CLU_076228_1_1_1"/>
<dbReference type="InParanoid" id="P52565"/>
<dbReference type="OMA" id="HPDHHDE"/>
<dbReference type="OrthoDB" id="1683373at2759"/>
<dbReference type="PAN-GO" id="P52565">
    <property type="GO annotations" value="4 GO annotations based on evolutionary models"/>
</dbReference>
<dbReference type="PhylomeDB" id="P52565"/>
<dbReference type="TreeFam" id="TF105387"/>
<dbReference type="PathwayCommons" id="P52565"/>
<dbReference type="Reactome" id="R-HSA-193634">
    <property type="pathway name" value="Axonal growth inhibition (RHOA activation)"/>
</dbReference>
<dbReference type="Reactome" id="R-HSA-209563">
    <property type="pathway name" value="Axonal growth stimulation"/>
</dbReference>
<dbReference type="Reactome" id="R-HSA-8980692">
    <property type="pathway name" value="RHOA GTPase cycle"/>
</dbReference>
<dbReference type="Reactome" id="R-HSA-9013106">
    <property type="pathway name" value="RHOC GTPase cycle"/>
</dbReference>
<dbReference type="Reactome" id="R-HSA-9013148">
    <property type="pathway name" value="CDC42 GTPase cycle"/>
</dbReference>
<dbReference type="Reactome" id="R-HSA-9013149">
    <property type="pathway name" value="RAC1 GTPase cycle"/>
</dbReference>
<dbReference type="Reactome" id="R-HSA-9013404">
    <property type="pathway name" value="RAC2 GTPase cycle"/>
</dbReference>
<dbReference type="Reactome" id="R-HSA-9013407">
    <property type="pathway name" value="RHOH GTPase cycle"/>
</dbReference>
<dbReference type="Reactome" id="R-HSA-9013408">
    <property type="pathway name" value="RHOG GTPase cycle"/>
</dbReference>
<dbReference type="SignaLink" id="P52565"/>
<dbReference type="SIGNOR" id="P52565"/>
<dbReference type="BioGRID-ORCS" id="396">
    <property type="hits" value="45 hits in 1159 CRISPR screens"/>
</dbReference>
<dbReference type="ChiTaRS" id="ARHGDIA">
    <property type="organism name" value="human"/>
</dbReference>
<dbReference type="EvolutionaryTrace" id="P52565"/>
<dbReference type="GeneWiki" id="ARHGDIA"/>
<dbReference type="GenomeRNAi" id="396"/>
<dbReference type="Pharos" id="P52565">
    <property type="development level" value="Tchem"/>
</dbReference>
<dbReference type="PRO" id="PR:P52565"/>
<dbReference type="Proteomes" id="UP000005640">
    <property type="component" value="Chromosome 17"/>
</dbReference>
<dbReference type="RNAct" id="P52565">
    <property type="molecule type" value="protein"/>
</dbReference>
<dbReference type="Bgee" id="ENSG00000141522">
    <property type="expression patterns" value="Expressed in granulocyte and 204 other cell types or tissues"/>
</dbReference>
<dbReference type="ExpressionAtlas" id="P52565">
    <property type="expression patterns" value="baseline and differential"/>
</dbReference>
<dbReference type="GO" id="GO:0005856">
    <property type="term" value="C:cytoskeleton"/>
    <property type="evidence" value="ECO:0000304"/>
    <property type="project" value="UniProtKB"/>
</dbReference>
<dbReference type="GO" id="GO:0005829">
    <property type="term" value="C:cytosol"/>
    <property type="evidence" value="ECO:0000318"/>
    <property type="project" value="GO_Central"/>
</dbReference>
<dbReference type="GO" id="GO:0070062">
    <property type="term" value="C:extracellular exosome"/>
    <property type="evidence" value="ECO:0007005"/>
    <property type="project" value="UniProtKB"/>
</dbReference>
<dbReference type="GO" id="GO:0001772">
    <property type="term" value="C:immunological synapse"/>
    <property type="evidence" value="ECO:0007669"/>
    <property type="project" value="Ensembl"/>
</dbReference>
<dbReference type="GO" id="GO:0016020">
    <property type="term" value="C:membrane"/>
    <property type="evidence" value="ECO:0000318"/>
    <property type="project" value="GO_Central"/>
</dbReference>
<dbReference type="GO" id="GO:0005634">
    <property type="term" value="C:nucleus"/>
    <property type="evidence" value="ECO:0007669"/>
    <property type="project" value="Ensembl"/>
</dbReference>
<dbReference type="GO" id="GO:0098685">
    <property type="term" value="C:Schaffer collateral - CA1 synapse"/>
    <property type="evidence" value="ECO:0007669"/>
    <property type="project" value="Ensembl"/>
</dbReference>
<dbReference type="GO" id="GO:0005096">
    <property type="term" value="F:GTPase activator activity"/>
    <property type="evidence" value="ECO:0007669"/>
    <property type="project" value="UniProtKB-KW"/>
</dbReference>
<dbReference type="GO" id="GO:0005094">
    <property type="term" value="F:Rho GDP-dissociation inhibitor activity"/>
    <property type="evidence" value="ECO:0000318"/>
    <property type="project" value="GO_Central"/>
</dbReference>
<dbReference type="GO" id="GO:0043066">
    <property type="term" value="P:negative regulation of apoptotic process"/>
    <property type="evidence" value="ECO:0000304"/>
    <property type="project" value="UniProtKB"/>
</dbReference>
<dbReference type="GO" id="GO:0032880">
    <property type="term" value="P:regulation of protein localization"/>
    <property type="evidence" value="ECO:0007669"/>
    <property type="project" value="Ensembl"/>
</dbReference>
<dbReference type="GO" id="GO:0035023">
    <property type="term" value="P:regulation of Rho protein signal transduction"/>
    <property type="evidence" value="ECO:0000315"/>
    <property type="project" value="UniProtKB"/>
</dbReference>
<dbReference type="GO" id="GO:0098693">
    <property type="term" value="P:regulation of synaptic vesicle cycle"/>
    <property type="evidence" value="ECO:0007669"/>
    <property type="project" value="Ensembl"/>
</dbReference>
<dbReference type="GO" id="GO:0007266">
    <property type="term" value="P:Rho protein signal transduction"/>
    <property type="evidence" value="ECO:0000318"/>
    <property type="project" value="GO_Central"/>
</dbReference>
<dbReference type="GO" id="GO:0071526">
    <property type="term" value="P:semaphorin-plexin signaling pathway"/>
    <property type="evidence" value="ECO:0000250"/>
    <property type="project" value="UniProtKB"/>
</dbReference>
<dbReference type="FunFam" id="2.70.50.30:FF:000004">
    <property type="entry name" value="Rho GDP-dissociation inhibitor 1"/>
    <property type="match status" value="1"/>
</dbReference>
<dbReference type="Gene3D" id="2.70.50.30">
    <property type="entry name" value="Coagulation Factor XIII, subunit A, domain 1"/>
    <property type="match status" value="1"/>
</dbReference>
<dbReference type="IDEAL" id="IID00273"/>
<dbReference type="InterPro" id="IPR014756">
    <property type="entry name" value="Ig_E-set"/>
</dbReference>
<dbReference type="InterPro" id="IPR000406">
    <property type="entry name" value="Rho_GDI"/>
</dbReference>
<dbReference type="InterPro" id="IPR024792">
    <property type="entry name" value="RhoGDI_dom_sf"/>
</dbReference>
<dbReference type="PANTHER" id="PTHR10980">
    <property type="entry name" value="RHO GDP-DISSOCIATION INHIBITOR"/>
    <property type="match status" value="1"/>
</dbReference>
<dbReference type="PANTHER" id="PTHR10980:SF9">
    <property type="entry name" value="RHO GDP-DISSOCIATION INHIBITOR 1"/>
    <property type="match status" value="1"/>
</dbReference>
<dbReference type="Pfam" id="PF02115">
    <property type="entry name" value="Rho_GDI"/>
    <property type="match status" value="1"/>
</dbReference>
<dbReference type="PRINTS" id="PR00492">
    <property type="entry name" value="RHOGDI"/>
</dbReference>
<dbReference type="SUPFAM" id="SSF81296">
    <property type="entry name" value="E set domains"/>
    <property type="match status" value="1"/>
</dbReference>
<reference key="1">
    <citation type="journal article" date="1993" name="Exp. Cell Res.">
        <title>Identification of two human Rho GDP dissociation inhibitor proteins whose overexpression leads to disruption of the actin cytoskeleton.</title>
        <authorList>
            <person name="Leffers H."/>
            <person name="Nielsen M.S."/>
            <person name="Andersen A.H."/>
            <person name="Honore B."/>
            <person name="Madsen P."/>
            <person name="Vandekerckhove J."/>
            <person name="Celis J.E."/>
        </authorList>
    </citation>
    <scope>NUCLEOTIDE SEQUENCE [MRNA] (ISOFORM 1)</scope>
</reference>
<reference key="2">
    <citation type="submission" date="1993-04" db="EMBL/GenBank/DDBJ databases">
        <title>Molecular cloning of human rho GDI.</title>
        <authorList>
            <person name="Maeda A."/>
            <person name="Kaibuchi K."/>
            <person name="Takai Y."/>
        </authorList>
    </citation>
    <scope>NUCLEOTIDE SEQUENCE [MRNA] (ISOFORM 1)</scope>
</reference>
<reference key="3">
    <citation type="submission" date="1992-07" db="EMBL/GenBank/DDBJ databases">
        <title>cDNA sequence of human rho GDP dissociation inhibitor.</title>
        <authorList>
            <person name="Chuang T.H."/>
            <person name="Bokoch G.M."/>
        </authorList>
    </citation>
    <scope>NUCLEOTIDE SEQUENCE [MRNA] (ISOFORM 1)</scope>
</reference>
<reference key="4">
    <citation type="submission" date="1992-03" db="EMBL/GenBank/DDBJ databases">
        <title>Genomic sequence of a human rho GDP dissociation inhibitor (GDI).</title>
        <authorList>
            <person name="Mulheron J.G."/>
            <person name="Schwinn D.A."/>
            <person name="Caron M.G."/>
            <person name="Liggett S.B."/>
        </authorList>
    </citation>
    <scope>NUCLEOTIDE SEQUENCE [GENOMIC DNA] (ISOFORM 1)</scope>
</reference>
<reference key="5">
    <citation type="journal article" date="2004" name="Nat. Genet.">
        <title>Complete sequencing and characterization of 21,243 full-length human cDNAs.</title>
        <authorList>
            <person name="Ota T."/>
            <person name="Suzuki Y."/>
            <person name="Nishikawa T."/>
            <person name="Otsuki T."/>
            <person name="Sugiyama T."/>
            <person name="Irie R."/>
            <person name="Wakamatsu A."/>
            <person name="Hayashi K."/>
            <person name="Sato H."/>
            <person name="Nagai K."/>
            <person name="Kimura K."/>
            <person name="Makita H."/>
            <person name="Sekine M."/>
            <person name="Obayashi M."/>
            <person name="Nishi T."/>
            <person name="Shibahara T."/>
            <person name="Tanaka T."/>
            <person name="Ishii S."/>
            <person name="Yamamoto J."/>
            <person name="Saito K."/>
            <person name="Kawai Y."/>
            <person name="Isono Y."/>
            <person name="Nakamura Y."/>
            <person name="Nagahari K."/>
            <person name="Murakami K."/>
            <person name="Yasuda T."/>
            <person name="Iwayanagi T."/>
            <person name="Wagatsuma M."/>
            <person name="Shiratori A."/>
            <person name="Sudo H."/>
            <person name="Hosoiri T."/>
            <person name="Kaku Y."/>
            <person name="Kodaira H."/>
            <person name="Kondo H."/>
            <person name="Sugawara M."/>
            <person name="Takahashi M."/>
            <person name="Kanda K."/>
            <person name="Yokoi T."/>
            <person name="Furuya T."/>
            <person name="Kikkawa E."/>
            <person name="Omura Y."/>
            <person name="Abe K."/>
            <person name="Kamihara K."/>
            <person name="Katsuta N."/>
            <person name="Sato K."/>
            <person name="Tanikawa M."/>
            <person name="Yamazaki M."/>
            <person name="Ninomiya K."/>
            <person name="Ishibashi T."/>
            <person name="Yamashita H."/>
            <person name="Murakawa K."/>
            <person name="Fujimori K."/>
            <person name="Tanai H."/>
            <person name="Kimata M."/>
            <person name="Watanabe M."/>
            <person name="Hiraoka S."/>
            <person name="Chiba Y."/>
            <person name="Ishida S."/>
            <person name="Ono Y."/>
            <person name="Takiguchi S."/>
            <person name="Watanabe S."/>
            <person name="Yosida M."/>
            <person name="Hotuta T."/>
            <person name="Kusano J."/>
            <person name="Kanehori K."/>
            <person name="Takahashi-Fujii A."/>
            <person name="Hara H."/>
            <person name="Tanase T.-O."/>
            <person name="Nomura Y."/>
            <person name="Togiya S."/>
            <person name="Komai F."/>
            <person name="Hara R."/>
            <person name="Takeuchi K."/>
            <person name="Arita M."/>
            <person name="Imose N."/>
            <person name="Musashino K."/>
            <person name="Yuuki H."/>
            <person name="Oshima A."/>
            <person name="Sasaki N."/>
            <person name="Aotsuka S."/>
            <person name="Yoshikawa Y."/>
            <person name="Matsunawa H."/>
            <person name="Ichihara T."/>
            <person name="Shiohata N."/>
            <person name="Sano S."/>
            <person name="Moriya S."/>
            <person name="Momiyama H."/>
            <person name="Satoh N."/>
            <person name="Takami S."/>
            <person name="Terashima Y."/>
            <person name="Suzuki O."/>
            <person name="Nakagawa S."/>
            <person name="Senoh A."/>
            <person name="Mizoguchi H."/>
            <person name="Goto Y."/>
            <person name="Shimizu F."/>
            <person name="Wakebe H."/>
            <person name="Hishigaki H."/>
            <person name="Watanabe T."/>
            <person name="Sugiyama A."/>
            <person name="Takemoto M."/>
            <person name="Kawakami B."/>
            <person name="Yamazaki M."/>
            <person name="Watanabe K."/>
            <person name="Kumagai A."/>
            <person name="Itakura S."/>
            <person name="Fukuzumi Y."/>
            <person name="Fujimori Y."/>
            <person name="Komiyama M."/>
            <person name="Tashiro H."/>
            <person name="Tanigami A."/>
            <person name="Fujiwara T."/>
            <person name="Ono T."/>
            <person name="Yamada K."/>
            <person name="Fujii Y."/>
            <person name="Ozaki K."/>
            <person name="Hirao M."/>
            <person name="Ohmori Y."/>
            <person name="Kawabata A."/>
            <person name="Hikiji T."/>
            <person name="Kobatake N."/>
            <person name="Inagaki H."/>
            <person name="Ikema Y."/>
            <person name="Okamoto S."/>
            <person name="Okitani R."/>
            <person name="Kawakami T."/>
            <person name="Noguchi S."/>
            <person name="Itoh T."/>
            <person name="Shigeta K."/>
            <person name="Senba T."/>
            <person name="Matsumura K."/>
            <person name="Nakajima Y."/>
            <person name="Mizuno T."/>
            <person name="Morinaga M."/>
            <person name="Sasaki M."/>
            <person name="Togashi T."/>
            <person name="Oyama M."/>
            <person name="Hata H."/>
            <person name="Watanabe M."/>
            <person name="Komatsu T."/>
            <person name="Mizushima-Sugano J."/>
            <person name="Satoh T."/>
            <person name="Shirai Y."/>
            <person name="Takahashi Y."/>
            <person name="Nakagawa K."/>
            <person name="Okumura K."/>
            <person name="Nagase T."/>
            <person name="Nomura N."/>
            <person name="Kikuchi H."/>
            <person name="Masuho Y."/>
            <person name="Yamashita R."/>
            <person name="Nakai K."/>
            <person name="Yada T."/>
            <person name="Nakamura Y."/>
            <person name="Ohara O."/>
            <person name="Isogai T."/>
            <person name="Sugano S."/>
        </authorList>
    </citation>
    <scope>NUCLEOTIDE SEQUENCE [LARGE SCALE MRNA] (ISOFORMS 1 AND 2)</scope>
    <source>
        <tissue>Brain cortex</tissue>
        <tissue>Neuroblastoma</tissue>
    </source>
</reference>
<reference key="6">
    <citation type="submission" date="2002-04" db="EMBL/GenBank/DDBJ databases">
        <title>cDNA clones of human proteins involved in signal transduction sequenced by the Guthrie cDNA resource center (www.cdna.org).</title>
        <authorList>
            <person name="Puhl H.L. III"/>
            <person name="Ikeda S.R."/>
            <person name="Aronstam R.S."/>
        </authorList>
    </citation>
    <scope>NUCLEOTIDE SEQUENCE [LARGE SCALE MRNA] (ISOFORM 1)</scope>
    <source>
        <tissue>Brain</tissue>
    </source>
</reference>
<reference key="7">
    <citation type="submission" date="2003-05" db="EMBL/GenBank/DDBJ databases">
        <title>Cloning of human full-length CDSs in BD Creator(TM) system donor vector.</title>
        <authorList>
            <person name="Kalnine N."/>
            <person name="Chen X."/>
            <person name="Rolfs A."/>
            <person name="Halleck A."/>
            <person name="Hines L."/>
            <person name="Eisenstein S."/>
            <person name="Koundinya M."/>
            <person name="Raphael J."/>
            <person name="Moreira D."/>
            <person name="Kelley T."/>
            <person name="LaBaer J."/>
            <person name="Lin Y."/>
            <person name="Phelan M."/>
            <person name="Farmer A."/>
        </authorList>
    </citation>
    <scope>NUCLEOTIDE SEQUENCE [LARGE SCALE MRNA] (ISOFORM 1)</scope>
</reference>
<reference key="8">
    <citation type="submission" date="2004-06" db="EMBL/GenBank/DDBJ databases">
        <title>Cloning of human full open reading frames in Gateway(TM) system entry vector (pDONR201).</title>
        <authorList>
            <person name="Ebert L."/>
            <person name="Schick M."/>
            <person name="Neubert P."/>
            <person name="Schatten R."/>
            <person name="Henze S."/>
            <person name="Korn B."/>
        </authorList>
    </citation>
    <scope>NUCLEOTIDE SEQUENCE [LARGE SCALE MRNA] (ISOFORM 1)</scope>
</reference>
<reference key="9">
    <citation type="journal article" date="2006" name="Nature">
        <title>DNA sequence of human chromosome 17 and analysis of rearrangement in the human lineage.</title>
        <authorList>
            <person name="Zody M.C."/>
            <person name="Garber M."/>
            <person name="Adams D.J."/>
            <person name="Sharpe T."/>
            <person name="Harrow J."/>
            <person name="Lupski J.R."/>
            <person name="Nicholson C."/>
            <person name="Searle S.M."/>
            <person name="Wilming L."/>
            <person name="Young S.K."/>
            <person name="Abouelleil A."/>
            <person name="Allen N.R."/>
            <person name="Bi W."/>
            <person name="Bloom T."/>
            <person name="Borowsky M.L."/>
            <person name="Bugalter B.E."/>
            <person name="Butler J."/>
            <person name="Chang J.L."/>
            <person name="Chen C.-K."/>
            <person name="Cook A."/>
            <person name="Corum B."/>
            <person name="Cuomo C.A."/>
            <person name="de Jong P.J."/>
            <person name="DeCaprio D."/>
            <person name="Dewar K."/>
            <person name="FitzGerald M."/>
            <person name="Gilbert J."/>
            <person name="Gibson R."/>
            <person name="Gnerre S."/>
            <person name="Goldstein S."/>
            <person name="Grafham D.V."/>
            <person name="Grocock R."/>
            <person name="Hafez N."/>
            <person name="Hagopian D.S."/>
            <person name="Hart E."/>
            <person name="Norman C.H."/>
            <person name="Humphray S."/>
            <person name="Jaffe D.B."/>
            <person name="Jones M."/>
            <person name="Kamal M."/>
            <person name="Khodiyar V.K."/>
            <person name="LaButti K."/>
            <person name="Laird G."/>
            <person name="Lehoczky J."/>
            <person name="Liu X."/>
            <person name="Lokyitsang T."/>
            <person name="Loveland J."/>
            <person name="Lui A."/>
            <person name="Macdonald P."/>
            <person name="Major J.E."/>
            <person name="Matthews L."/>
            <person name="Mauceli E."/>
            <person name="McCarroll S.A."/>
            <person name="Mihalev A.H."/>
            <person name="Mudge J."/>
            <person name="Nguyen C."/>
            <person name="Nicol R."/>
            <person name="O'Leary S.B."/>
            <person name="Osoegawa K."/>
            <person name="Schwartz D.C."/>
            <person name="Shaw-Smith C."/>
            <person name="Stankiewicz P."/>
            <person name="Steward C."/>
            <person name="Swarbreck D."/>
            <person name="Venkataraman V."/>
            <person name="Whittaker C.A."/>
            <person name="Yang X."/>
            <person name="Zimmer A.R."/>
            <person name="Bradley A."/>
            <person name="Hubbard T."/>
            <person name="Birren B.W."/>
            <person name="Rogers J."/>
            <person name="Lander E.S."/>
            <person name="Nusbaum C."/>
        </authorList>
    </citation>
    <scope>NUCLEOTIDE SEQUENCE [LARGE SCALE GENOMIC DNA]</scope>
</reference>
<reference key="10">
    <citation type="submission" date="2005-07" db="EMBL/GenBank/DDBJ databases">
        <authorList>
            <person name="Mural R.J."/>
            <person name="Istrail S."/>
            <person name="Sutton G.G."/>
            <person name="Florea L."/>
            <person name="Halpern A.L."/>
            <person name="Mobarry C.M."/>
            <person name="Lippert R."/>
            <person name="Walenz B."/>
            <person name="Shatkay H."/>
            <person name="Dew I."/>
            <person name="Miller J.R."/>
            <person name="Flanigan M.J."/>
            <person name="Edwards N.J."/>
            <person name="Bolanos R."/>
            <person name="Fasulo D."/>
            <person name="Halldorsson B.V."/>
            <person name="Hannenhalli S."/>
            <person name="Turner R."/>
            <person name="Yooseph S."/>
            <person name="Lu F."/>
            <person name="Nusskern D.R."/>
            <person name="Shue B.C."/>
            <person name="Zheng X.H."/>
            <person name="Zhong F."/>
            <person name="Delcher A.L."/>
            <person name="Huson D.H."/>
            <person name="Kravitz S.A."/>
            <person name="Mouchard L."/>
            <person name="Reinert K."/>
            <person name="Remington K.A."/>
            <person name="Clark A.G."/>
            <person name="Waterman M.S."/>
            <person name="Eichler E.E."/>
            <person name="Adams M.D."/>
            <person name="Hunkapiller M.W."/>
            <person name="Myers E.W."/>
            <person name="Venter J.C."/>
        </authorList>
    </citation>
    <scope>NUCLEOTIDE SEQUENCE [LARGE SCALE GENOMIC DNA]</scope>
</reference>
<reference key="11">
    <citation type="journal article" date="2004" name="Genome Res.">
        <title>The status, quality, and expansion of the NIH full-length cDNA project: the Mammalian Gene Collection (MGC).</title>
        <authorList>
            <consortium name="The MGC Project Team"/>
        </authorList>
    </citation>
    <scope>NUCLEOTIDE SEQUENCE [LARGE SCALE MRNA] (ISOFORM 1)</scope>
    <source>
        <tissue>Colon</tissue>
        <tissue>Lung</tissue>
        <tissue>Muscle</tissue>
        <tissue>Skin</tissue>
        <tissue>Tonsil</tissue>
        <tissue>Uterus</tissue>
    </source>
</reference>
<reference key="12">
    <citation type="submission" date="2006-05" db="UniProtKB">
        <authorList>
            <person name="Bienvenut W.V."/>
            <person name="Kanor S."/>
            <person name="Tissot J.-D."/>
            <person name="Quadroni M."/>
        </authorList>
    </citation>
    <scope>PROTEIN SEQUENCE OF 2-42</scope>
    <scope>CLEAVAGE OF INITIATOR METHIONINE</scope>
    <scope>ACETYLATION AT ALA-2</scope>
    <scope>IDENTIFICATION BY MASS SPECTROMETRY</scope>
    <source>
        <tissue>T-cell</tissue>
    </source>
</reference>
<reference key="13">
    <citation type="submission" date="2008-12" db="UniProtKB">
        <authorList>
            <person name="Lubec G."/>
            <person name="Vishwanath V."/>
            <person name="Chen W.-Q."/>
            <person name="Sun Y."/>
        </authorList>
    </citation>
    <scope>PROTEIN SEQUENCE OF 34-50; 139-167 AND 181-199</scope>
    <scope>IDENTIFICATION BY MASS SPECTROMETRY</scope>
    <source>
        <tissue>Brain</tissue>
        <tissue>Cajal-Retzius cell</tissue>
        <tissue>Fetal brain cortex</tissue>
    </source>
</reference>
<reference key="14">
    <citation type="journal article" date="1993" name="Biochemistry">
        <title>Regulation of the human neutrophil NADPH oxidase by rho-related G-proteins.</title>
        <authorList>
            <person name="Kwong C.H."/>
            <person name="Malech H.L."/>
            <person name="Rotrosen D."/>
            <person name="Leto T.L."/>
        </authorList>
    </citation>
    <scope>PROTEIN SEQUENCE OF 34-37; 136-142 AND 181-199</scope>
    <source>
        <tissue>Neutrophil</tissue>
    </source>
</reference>
<reference key="15">
    <citation type="journal article" date="2006" name="Mol. Cell">
        <title>Substrate and functional diversity of lysine acetylation revealed by a proteomics survey.</title>
        <authorList>
            <person name="Kim S.C."/>
            <person name="Sprung R."/>
            <person name="Chen Y."/>
            <person name="Xu Y."/>
            <person name="Ball H."/>
            <person name="Pei J."/>
            <person name="Cheng T."/>
            <person name="Kho Y."/>
            <person name="Xiao H."/>
            <person name="Xiao L."/>
            <person name="Grishin N.V."/>
            <person name="White M."/>
            <person name="Yang X.-J."/>
            <person name="Zhao Y."/>
        </authorList>
    </citation>
    <scope>ACETYLATION [LARGE SCALE ANALYSIS] AT LYS-141</scope>
    <scope>IDENTIFICATION BY MASS SPECTROMETRY [LARGE SCALE ANALYSIS]</scope>
    <source>
        <tissue>Cervix carcinoma</tissue>
    </source>
</reference>
<reference key="16">
    <citation type="journal article" date="2009" name="Anal. Chem.">
        <title>Lys-N and trypsin cover complementary parts of the phosphoproteome in a refined SCX-based approach.</title>
        <authorList>
            <person name="Gauci S."/>
            <person name="Helbig A.O."/>
            <person name="Slijper M."/>
            <person name="Krijgsveld J."/>
            <person name="Heck A.J."/>
            <person name="Mohammed S."/>
        </authorList>
    </citation>
    <scope>ACETYLATION [LARGE SCALE ANALYSIS] AT ALA-2</scope>
    <scope>CLEAVAGE OF INITIATOR METHIONINE [LARGE SCALE ANALYSIS]</scope>
    <scope>IDENTIFICATION BY MASS SPECTROMETRY [LARGE SCALE ANALYSIS]</scope>
</reference>
<reference key="17">
    <citation type="journal article" date="2009" name="Science">
        <title>Lysine acetylation targets protein complexes and co-regulates major cellular functions.</title>
        <authorList>
            <person name="Choudhary C."/>
            <person name="Kumar C."/>
            <person name="Gnad F."/>
            <person name="Nielsen M.L."/>
            <person name="Rehman M."/>
            <person name="Walther T.C."/>
            <person name="Olsen J.V."/>
            <person name="Mann M."/>
        </authorList>
    </citation>
    <scope>ACETYLATION [LARGE SCALE ANALYSIS] AT LYS-105; LYS-127; LYS-141 AND LYS-178</scope>
    <scope>IDENTIFICATION BY MASS SPECTROMETRY [LARGE SCALE ANALYSIS]</scope>
</reference>
<reference key="18">
    <citation type="journal article" date="2010" name="BMC Biochem.">
        <title>The Fer tyrosine kinase regulates interactions of Rho GDP-Dissociation Inhibitor alpha with the small GTPase Rac.</title>
        <authorList>
            <person name="Fei F."/>
            <person name="Kweon S.M."/>
            <person name="Haataja L."/>
            <person name="De Sepulveda P."/>
            <person name="Groffen J."/>
            <person name="Heisterkamp N."/>
        </authorList>
    </citation>
    <scope>INTERACTION WITH FER</scope>
</reference>
<reference key="19">
    <citation type="journal article" date="2010" name="J. Clin. Invest.">
        <title>Gankyrin plays an essential role in Ras-induced tumorigenesis through regulation of the RhoA/ROCK pathway in mammalian cells.</title>
        <authorList>
            <person name="Man J.H."/>
            <person name="Liang B."/>
            <person name="Gu Y.X."/>
            <person name="Zhou T."/>
            <person name="Li A.L."/>
            <person name="Li T."/>
            <person name="Jin B.F."/>
            <person name="Bai B."/>
            <person name="Zhang H.Y."/>
            <person name="Zhang W.N."/>
            <person name="Li W.H."/>
            <person name="Gong W.L."/>
            <person name="Li H.Y."/>
            <person name="Zhang X.M."/>
        </authorList>
    </citation>
    <scope>INTERACTION WITH PSMD10 AND RHOA</scope>
</reference>
<reference key="20">
    <citation type="journal article" date="2010" name="Nat. Cell Biol.">
        <title>Regulation of Rho GTPase crosstalk, degradation and activity by RhoGDI1.</title>
        <authorList>
            <person name="Boulter E."/>
            <person name="Garcia-Mata R."/>
            <person name="Guilluy C."/>
            <person name="Dubash A."/>
            <person name="Rossi G."/>
            <person name="Brennwald P.J."/>
            <person name="Burridge K."/>
        </authorList>
    </citation>
    <scope>FUNCTION</scope>
    <scope>INTERACTION WITH RHOA AND RHOC</scope>
    <scope>MUTAGENESIS OF ASP-45 AND ASP-185</scope>
</reference>
<reference key="21">
    <citation type="journal article" date="2010" name="Sci. Signal.">
        <title>Quantitative phosphoproteomics reveals widespread full phosphorylation site occupancy during mitosis.</title>
        <authorList>
            <person name="Olsen J.V."/>
            <person name="Vermeulen M."/>
            <person name="Santamaria A."/>
            <person name="Kumar C."/>
            <person name="Miller M.L."/>
            <person name="Jensen L.J."/>
            <person name="Gnad F."/>
            <person name="Cox J."/>
            <person name="Jensen T.S."/>
            <person name="Nigg E.A."/>
            <person name="Brunak S."/>
            <person name="Mann M."/>
        </authorList>
    </citation>
    <scope>ACETYLATION [LARGE SCALE ANALYSIS] AT ALA-2</scope>
    <scope>CLEAVAGE OF INITIATOR METHIONINE [LARGE SCALE ANALYSIS]</scope>
    <scope>IDENTIFICATION BY MASS SPECTROMETRY [LARGE SCALE ANALYSIS]</scope>
    <source>
        <tissue>Cervix carcinoma</tissue>
    </source>
</reference>
<reference key="22">
    <citation type="journal article" date="2011" name="BMC Syst. Biol.">
        <title>Initial characterization of the human central proteome.</title>
        <authorList>
            <person name="Burkard T.R."/>
            <person name="Planyavsky M."/>
            <person name="Kaupe I."/>
            <person name="Breitwieser F.P."/>
            <person name="Buerckstuemmer T."/>
            <person name="Bennett K.L."/>
            <person name="Superti-Furga G."/>
            <person name="Colinge J."/>
        </authorList>
    </citation>
    <scope>IDENTIFICATION BY MASS SPECTROMETRY [LARGE SCALE ANALYSIS]</scope>
</reference>
<reference key="23">
    <citation type="journal article" date="2013" name="J. Proteome Res.">
        <title>Toward a comprehensive characterization of a human cancer cell phosphoproteome.</title>
        <authorList>
            <person name="Zhou H."/>
            <person name="Di Palma S."/>
            <person name="Preisinger C."/>
            <person name="Peng M."/>
            <person name="Polat A.N."/>
            <person name="Heck A.J."/>
            <person name="Mohammed S."/>
        </authorList>
    </citation>
    <scope>PHOSPHORYLATION [LARGE SCALE ANALYSIS] AT SER-47</scope>
    <scope>IDENTIFICATION BY MASS SPECTROMETRY [LARGE SCALE ANALYSIS]</scope>
    <source>
        <tissue>Cervix carcinoma</tissue>
        <tissue>Erythroleukemia</tissue>
    </source>
</reference>
<reference key="24">
    <citation type="journal article" date="2014" name="J. Proteomics">
        <title>An enzyme assisted RP-RPLC approach for in-depth analysis of human liver phosphoproteome.</title>
        <authorList>
            <person name="Bian Y."/>
            <person name="Song C."/>
            <person name="Cheng K."/>
            <person name="Dong M."/>
            <person name="Wang F."/>
            <person name="Huang J."/>
            <person name="Sun D."/>
            <person name="Wang L."/>
            <person name="Ye M."/>
            <person name="Zou H."/>
        </authorList>
    </citation>
    <scope>IDENTIFICATION BY MASS SPECTROMETRY [LARGE SCALE ANALYSIS]</scope>
    <source>
        <tissue>Liver</tissue>
    </source>
</reference>
<reference key="25">
    <citation type="journal article" date="2014" name="Proc. Natl. Acad. Sci. U.S.A.">
        <title>Mapping of SUMO sites and analysis of SUMOylation changes induced by external stimuli.</title>
        <authorList>
            <person name="Impens F."/>
            <person name="Radoshevich L."/>
            <person name="Cossart P."/>
            <person name="Ribet D."/>
        </authorList>
    </citation>
    <scope>SUMOYLATION [LARGE SCALE ANALYSIS] AT LYS-138 AND LYS-141</scope>
    <scope>IDENTIFICATION BY MASS SPECTROMETRY [LARGE SCALE ANALYSIS]</scope>
</reference>
<reference key="26">
    <citation type="journal article" date="2015" name="J. Clin. Invest.">
        <title>KANK deficiency leads to podocyte dysfunction and nephrotic syndrome.</title>
        <authorList>
            <person name="Gee H.Y."/>
            <person name="Zhang F."/>
            <person name="Ashraf S."/>
            <person name="Kohl S."/>
            <person name="Sadowski C.E."/>
            <person name="Vega-Warner V."/>
            <person name="Zhou W."/>
            <person name="Lovric S."/>
            <person name="Fang H."/>
            <person name="Nettleton M."/>
            <person name="Zhu J.Y."/>
            <person name="Hoefele J."/>
            <person name="Weber L.T."/>
            <person name="Podracka L."/>
            <person name="Boor A."/>
            <person name="Fehrenbach H."/>
            <person name="Innis J.W."/>
            <person name="Washburn J."/>
            <person name="Levy S."/>
            <person name="Lifton R.P."/>
            <person name="Otto E.A."/>
            <person name="Han Z."/>
            <person name="Hildebrandt F."/>
        </authorList>
    </citation>
    <scope>INTERACTION WITH KANK2</scope>
</reference>
<reference key="27">
    <citation type="journal article" date="2015" name="Proteomics">
        <title>N-terminome analysis of the human mitochondrial proteome.</title>
        <authorList>
            <person name="Vaca Jacome A.S."/>
            <person name="Rabilloud T."/>
            <person name="Schaeffer-Reiss C."/>
            <person name="Rompais M."/>
            <person name="Ayoub D."/>
            <person name="Lane L."/>
            <person name="Bairoch A."/>
            <person name="Van Dorsselaer A."/>
            <person name="Carapito C."/>
        </authorList>
    </citation>
    <scope>IDENTIFICATION BY MASS SPECTROMETRY [LARGE SCALE ANALYSIS]</scope>
</reference>
<reference key="28">
    <citation type="journal article" date="1997" name="Structure">
        <title>A modulator of rho family G proteins, rhoGDI, binds these G proteins via an immunoglobulin-like domain and a flexible N-terminal arm.</title>
        <authorList>
            <person name="Keep N.H."/>
            <person name="Barnes M."/>
            <person name="Barsukov I."/>
            <person name="Badii R."/>
            <person name="Lian L.-Y."/>
            <person name="Segal A.W."/>
            <person name="Moody P.C.E."/>
            <person name="Roberts G.C.K."/>
        </authorList>
    </citation>
    <scope>X-RAY CRYSTALLOGRAPHY (2.5 ANGSTROMS) OF 59-204</scope>
</reference>
<reference evidence="12" key="29">
    <citation type="journal article" date="2015" name="Elife">
        <title>Structural basis of death domain signaling in the p75 neurotrophin receptor.</title>
        <authorList>
            <person name="Lin Z."/>
            <person name="Tann J.Y."/>
            <person name="Goh E.T."/>
            <person name="Kelly C."/>
            <person name="Lim K.B."/>
            <person name="Gao J.F."/>
            <person name="Ibanez C.F."/>
        </authorList>
    </citation>
    <scope>STRUCTURE BY NMR OF 31-204 IN COMPLEX WITH NGFR</scope>
    <scope>INTERACTION WITH RHOA AND NGFR</scope>
    <scope>MUTAGENESIS OF LYS-99 AND LYS-199</scope>
</reference>
<reference key="30">
    <citation type="journal article" date="2013" name="J. Med. Genet.">
        <title>ARHGDIA: a novel gene implicated in nephrotic syndrome.</title>
        <authorList>
            <person name="Gupta I.R."/>
            <person name="Baldwin C."/>
            <person name="Auguste D."/>
            <person name="Ha K.C."/>
            <person name="El Andalousi J."/>
            <person name="Fahiminiya S."/>
            <person name="Bitzan M."/>
            <person name="Bernard C."/>
            <person name="Akbari M.R."/>
            <person name="Narod S.A."/>
            <person name="Rosenblatt D.S."/>
            <person name="Majewski J."/>
            <person name="Takano T."/>
        </authorList>
    </citation>
    <scope>VARIANT NPHS8 ASP-185 DEL</scope>
    <scope>CHARACTERIZATION OF VARIANT NPHS8 ASP-185 DEL</scope>
    <scope>FUNCTION</scope>
    <scope>SUBCELLULAR LOCATION</scope>
    <scope>INTERACTION WITH RAC1; RHOA AND CDC42</scope>
</reference>
<protein>
    <recommendedName>
        <fullName>Rho GDP-dissociation inhibitor 1</fullName>
        <shortName>Rho GDI 1</shortName>
    </recommendedName>
    <alternativeName>
        <fullName>Rho-GDI alpha</fullName>
    </alternativeName>
</protein>
<organism>
    <name type="scientific">Homo sapiens</name>
    <name type="common">Human</name>
    <dbReference type="NCBI Taxonomy" id="9606"/>
    <lineage>
        <taxon>Eukaryota</taxon>
        <taxon>Metazoa</taxon>
        <taxon>Chordata</taxon>
        <taxon>Craniata</taxon>
        <taxon>Vertebrata</taxon>
        <taxon>Euteleostomi</taxon>
        <taxon>Mammalia</taxon>
        <taxon>Eutheria</taxon>
        <taxon>Euarchontoglires</taxon>
        <taxon>Primates</taxon>
        <taxon>Haplorrhini</taxon>
        <taxon>Catarrhini</taxon>
        <taxon>Hominidae</taxon>
        <taxon>Homo</taxon>
    </lineage>
</organism>